<gene>
    <name type="primary">cheY</name>
    <name type="ordered locus">CJJ81176_1136</name>
</gene>
<sequence length="130" mass="14437">MKLLVVDDSSTMRRIIKNTLTRLGHDDVLEAEHGVEAWDLLTKNEDVKVLITDWNMPEMNGLELVKKVRAEKKYEDMPIIMVTTEGGKAEVITALKAGVNNYIVKPFTPQVLKEKLEDVLGTGSGEGAAE</sequence>
<protein>
    <recommendedName>
        <fullName>Chemotaxis protein CheY homolog</fullName>
    </recommendedName>
</protein>
<keyword id="KW-0145">Chemotaxis</keyword>
<keyword id="KW-0963">Cytoplasm</keyword>
<keyword id="KW-0283">Flagellar rotation</keyword>
<keyword id="KW-0460">Magnesium</keyword>
<keyword id="KW-0479">Metal-binding</keyword>
<keyword id="KW-0597">Phosphoprotein</keyword>
<keyword id="KW-0902">Two-component regulatory system</keyword>
<comment type="function">
    <text evidence="2">Involved in the transmission of sensory signals from the chemoreceptors to the flagellar motors. CheY seems to regulate the clockwise (CW) rotation (By similarity).</text>
</comment>
<comment type="cofactor">
    <cofactor evidence="2">
        <name>Mg(2+)</name>
        <dbReference type="ChEBI" id="CHEBI:18420"/>
    </cofactor>
    <text evidence="2">Binds 1 Mg(2+) ion per subunit.</text>
</comment>
<comment type="subcellular location">
    <subcellularLocation>
        <location evidence="4">Cytoplasm</location>
    </subcellularLocation>
</comment>
<comment type="sequence caution" evidence="4">
    <conflict type="erroneous initiation">
        <sequence resource="EMBL-CDS" id="AAC44858"/>
    </conflict>
</comment>
<feature type="chain" id="PRO_0000281899" description="Chemotaxis protein CheY homolog">
    <location>
        <begin position="1"/>
        <end position="130"/>
    </location>
</feature>
<feature type="domain" description="Response regulatory" evidence="3">
    <location>
        <begin position="2"/>
        <end position="120"/>
    </location>
</feature>
<feature type="binding site" evidence="1">
    <location>
        <position position="7"/>
    </location>
    <ligand>
        <name>Mg(2+)</name>
        <dbReference type="ChEBI" id="CHEBI:18420"/>
    </ligand>
</feature>
<feature type="binding site" evidence="2">
    <location>
        <position position="8"/>
    </location>
    <ligand>
        <name>Mg(2+)</name>
        <dbReference type="ChEBI" id="CHEBI:18420"/>
    </ligand>
</feature>
<feature type="binding site" evidence="2">
    <location>
        <position position="53"/>
    </location>
    <ligand>
        <name>Mg(2+)</name>
        <dbReference type="ChEBI" id="CHEBI:18420"/>
    </ligand>
</feature>
<feature type="binding site" evidence="2">
    <location>
        <position position="55"/>
    </location>
    <ligand>
        <name>Mg(2+)</name>
        <dbReference type="ChEBI" id="CHEBI:18420"/>
    </ligand>
</feature>
<feature type="modified residue" description="4-aspartylphosphate" evidence="3">
    <location>
        <position position="53"/>
    </location>
</feature>
<evidence type="ECO:0000250" key="1">
    <source>
        <dbReference type="UniProtKB" id="A0A0H3AMJ9"/>
    </source>
</evidence>
<evidence type="ECO:0000250" key="2">
    <source>
        <dbReference type="UniProtKB" id="P0AE67"/>
    </source>
</evidence>
<evidence type="ECO:0000255" key="3">
    <source>
        <dbReference type="PROSITE-ProRule" id="PRU00169"/>
    </source>
</evidence>
<evidence type="ECO:0000305" key="4"/>
<accession>A1W0A5</accession>
<accession>P71129</accession>
<name>CHEY_CAMJJ</name>
<proteinExistence type="inferred from homology"/>
<organism>
    <name type="scientific">Campylobacter jejuni subsp. jejuni serotype O:23/36 (strain 81-176)</name>
    <dbReference type="NCBI Taxonomy" id="354242"/>
    <lineage>
        <taxon>Bacteria</taxon>
        <taxon>Pseudomonadati</taxon>
        <taxon>Campylobacterota</taxon>
        <taxon>Epsilonproteobacteria</taxon>
        <taxon>Campylobacterales</taxon>
        <taxon>Campylobacteraceae</taxon>
        <taxon>Campylobacter</taxon>
    </lineage>
</organism>
<reference key="1">
    <citation type="journal article" date="1997" name="Mol. Microbiol.">
        <title>CheY-mediated modulation of Campylobacter jejuni virulence.</title>
        <authorList>
            <person name="Yao R."/>
            <person name="Burr D.H."/>
            <person name="Guerry P."/>
        </authorList>
    </citation>
    <scope>NUCLEOTIDE SEQUENCE [GENOMIC DNA]</scope>
</reference>
<reference key="2">
    <citation type="submission" date="2006-12" db="EMBL/GenBank/DDBJ databases">
        <authorList>
            <person name="Fouts D.E."/>
            <person name="Nelson K.E."/>
            <person name="Sebastian Y."/>
        </authorList>
    </citation>
    <scope>NUCLEOTIDE SEQUENCE [LARGE SCALE GENOMIC DNA]</scope>
    <source>
        <strain>81-176</strain>
    </source>
</reference>
<dbReference type="EMBL" id="U62038">
    <property type="protein sequence ID" value="AAC44858.1"/>
    <property type="status" value="ALT_INIT"/>
    <property type="molecule type" value="Genomic_DNA"/>
</dbReference>
<dbReference type="EMBL" id="CP000538">
    <property type="protein sequence ID" value="EAQ72145.1"/>
    <property type="molecule type" value="Genomic_DNA"/>
</dbReference>
<dbReference type="RefSeq" id="WP_002866134.1">
    <property type="nucleotide sequence ID" value="NC_008787.1"/>
</dbReference>
<dbReference type="SMR" id="A1W0A5"/>
<dbReference type="KEGG" id="cjj:CJJ81176_1136"/>
<dbReference type="eggNOG" id="COG0745">
    <property type="taxonomic scope" value="Bacteria"/>
</dbReference>
<dbReference type="HOGENOM" id="CLU_000445_69_12_7"/>
<dbReference type="Proteomes" id="UP000000646">
    <property type="component" value="Chromosome"/>
</dbReference>
<dbReference type="GO" id="GO:0005737">
    <property type="term" value="C:cytoplasm"/>
    <property type="evidence" value="ECO:0007669"/>
    <property type="project" value="UniProtKB-SubCell"/>
</dbReference>
<dbReference type="GO" id="GO:0046872">
    <property type="term" value="F:metal ion binding"/>
    <property type="evidence" value="ECO:0007669"/>
    <property type="project" value="UniProtKB-KW"/>
</dbReference>
<dbReference type="GO" id="GO:0097588">
    <property type="term" value="P:archaeal or bacterial-type flagellum-dependent cell motility"/>
    <property type="evidence" value="ECO:0007669"/>
    <property type="project" value="UniProtKB-KW"/>
</dbReference>
<dbReference type="GO" id="GO:0006935">
    <property type="term" value="P:chemotaxis"/>
    <property type="evidence" value="ECO:0007669"/>
    <property type="project" value="UniProtKB-KW"/>
</dbReference>
<dbReference type="GO" id="GO:0000160">
    <property type="term" value="P:phosphorelay signal transduction system"/>
    <property type="evidence" value="ECO:0007669"/>
    <property type="project" value="UniProtKB-KW"/>
</dbReference>
<dbReference type="CDD" id="cd19923">
    <property type="entry name" value="REC_CheY_CheY3"/>
    <property type="match status" value="1"/>
</dbReference>
<dbReference type="Gene3D" id="3.40.50.2300">
    <property type="match status" value="1"/>
</dbReference>
<dbReference type="InterPro" id="IPR050595">
    <property type="entry name" value="Bact_response_regulator"/>
</dbReference>
<dbReference type="InterPro" id="IPR011006">
    <property type="entry name" value="CheY-like_superfamily"/>
</dbReference>
<dbReference type="InterPro" id="IPR001789">
    <property type="entry name" value="Sig_transdc_resp-reg_receiver"/>
</dbReference>
<dbReference type="PANTHER" id="PTHR44591:SF14">
    <property type="entry name" value="PROTEIN PILG"/>
    <property type="match status" value="1"/>
</dbReference>
<dbReference type="PANTHER" id="PTHR44591">
    <property type="entry name" value="STRESS RESPONSE REGULATOR PROTEIN 1"/>
    <property type="match status" value="1"/>
</dbReference>
<dbReference type="Pfam" id="PF00072">
    <property type="entry name" value="Response_reg"/>
    <property type="match status" value="1"/>
</dbReference>
<dbReference type="SMART" id="SM00448">
    <property type="entry name" value="REC"/>
    <property type="match status" value="1"/>
</dbReference>
<dbReference type="SUPFAM" id="SSF52172">
    <property type="entry name" value="CheY-like"/>
    <property type="match status" value="1"/>
</dbReference>
<dbReference type="PROSITE" id="PS50110">
    <property type="entry name" value="RESPONSE_REGULATORY"/>
    <property type="match status" value="1"/>
</dbReference>